<reference key="1">
    <citation type="journal article" date="2005" name="Science">
        <title>Extensive DNA inversions in the B. fragilis genome control variable gene expression.</title>
        <authorList>
            <person name="Cerdeno-Tarraga A.-M."/>
            <person name="Patrick S."/>
            <person name="Crossman L.C."/>
            <person name="Blakely G."/>
            <person name="Abratt V."/>
            <person name="Lennard N."/>
            <person name="Poxton I."/>
            <person name="Duerden B."/>
            <person name="Harris B."/>
            <person name="Quail M.A."/>
            <person name="Barron A."/>
            <person name="Clark L."/>
            <person name="Corton C."/>
            <person name="Doggett J."/>
            <person name="Holden M.T.G."/>
            <person name="Larke N."/>
            <person name="Line A."/>
            <person name="Lord A."/>
            <person name="Norbertczak H."/>
            <person name="Ormond D."/>
            <person name="Price C."/>
            <person name="Rabbinowitsch E."/>
            <person name="Woodward J."/>
            <person name="Barrell B.G."/>
            <person name="Parkhill J."/>
        </authorList>
    </citation>
    <scope>NUCLEOTIDE SEQUENCE [LARGE SCALE GENOMIC DNA]</scope>
    <source>
        <strain>ATCC 25285 / DSM 2151 / CCUG 4856 / JCM 11019 / LMG 10263 / NCTC 9343 / Onslow / VPI 2553 / EN-2</strain>
    </source>
</reference>
<keyword id="KW-0963">Cytoplasm</keyword>
<keyword id="KW-0328">Glycosyltransferase</keyword>
<keyword id="KW-0660">Purine salvage</keyword>
<keyword id="KW-0808">Transferase</keyword>
<sequence length="178" mass="20134">MIMSKEKLIKSIREVPDFPIPGILFYDVTTLFKDSERLQELSDIMYEMYKDKGITKVVGIESRGFIMGPILATRLGAGFIPIRKPGKLPAETMEESYDKEYGKDTVQIHKDALNENDVVLLHDDLLATGGTMKAACNLVKKLHPKKVYVNFIIELKELNGKQVFENDQDVDIQSVLSL</sequence>
<accession>Q5LIY6</accession>
<organism>
    <name type="scientific">Bacteroides fragilis (strain ATCC 25285 / DSM 2151 / CCUG 4856 / JCM 11019 / LMG 10263 / NCTC 9343 / Onslow / VPI 2553 / EN-2)</name>
    <dbReference type="NCBI Taxonomy" id="272559"/>
    <lineage>
        <taxon>Bacteria</taxon>
        <taxon>Pseudomonadati</taxon>
        <taxon>Bacteroidota</taxon>
        <taxon>Bacteroidia</taxon>
        <taxon>Bacteroidales</taxon>
        <taxon>Bacteroidaceae</taxon>
        <taxon>Bacteroides</taxon>
    </lineage>
</organism>
<dbReference type="EC" id="2.4.2.7" evidence="1"/>
<dbReference type="EMBL" id="CR626927">
    <property type="protein sequence ID" value="CAH05890.1"/>
    <property type="molecule type" value="Genomic_DNA"/>
</dbReference>
<dbReference type="SMR" id="Q5LIY6"/>
<dbReference type="PaxDb" id="272559-BF9343_0111"/>
<dbReference type="KEGG" id="bfs:BF9343_0111"/>
<dbReference type="eggNOG" id="COG0503">
    <property type="taxonomic scope" value="Bacteria"/>
</dbReference>
<dbReference type="HOGENOM" id="CLU_063339_3_0_10"/>
<dbReference type="UniPathway" id="UPA00588">
    <property type="reaction ID" value="UER00646"/>
</dbReference>
<dbReference type="Proteomes" id="UP000006731">
    <property type="component" value="Chromosome"/>
</dbReference>
<dbReference type="GO" id="GO:0005737">
    <property type="term" value="C:cytoplasm"/>
    <property type="evidence" value="ECO:0007669"/>
    <property type="project" value="UniProtKB-SubCell"/>
</dbReference>
<dbReference type="GO" id="GO:0002055">
    <property type="term" value="F:adenine binding"/>
    <property type="evidence" value="ECO:0007669"/>
    <property type="project" value="TreeGrafter"/>
</dbReference>
<dbReference type="GO" id="GO:0003999">
    <property type="term" value="F:adenine phosphoribosyltransferase activity"/>
    <property type="evidence" value="ECO:0007669"/>
    <property type="project" value="UniProtKB-UniRule"/>
</dbReference>
<dbReference type="GO" id="GO:0016208">
    <property type="term" value="F:AMP binding"/>
    <property type="evidence" value="ECO:0007669"/>
    <property type="project" value="TreeGrafter"/>
</dbReference>
<dbReference type="GO" id="GO:0006168">
    <property type="term" value="P:adenine salvage"/>
    <property type="evidence" value="ECO:0007669"/>
    <property type="project" value="InterPro"/>
</dbReference>
<dbReference type="GO" id="GO:0044209">
    <property type="term" value="P:AMP salvage"/>
    <property type="evidence" value="ECO:0007669"/>
    <property type="project" value="UniProtKB-UniRule"/>
</dbReference>
<dbReference type="GO" id="GO:0006166">
    <property type="term" value="P:purine ribonucleoside salvage"/>
    <property type="evidence" value="ECO:0007669"/>
    <property type="project" value="UniProtKB-KW"/>
</dbReference>
<dbReference type="CDD" id="cd06223">
    <property type="entry name" value="PRTases_typeI"/>
    <property type="match status" value="1"/>
</dbReference>
<dbReference type="FunFam" id="3.40.50.2020:FF:000021">
    <property type="entry name" value="Adenine phosphoribosyltransferase"/>
    <property type="match status" value="1"/>
</dbReference>
<dbReference type="Gene3D" id="3.40.50.2020">
    <property type="match status" value="1"/>
</dbReference>
<dbReference type="HAMAP" id="MF_00004">
    <property type="entry name" value="Aden_phosphoribosyltr"/>
    <property type="match status" value="1"/>
</dbReference>
<dbReference type="InterPro" id="IPR005764">
    <property type="entry name" value="Ade_phspho_trans"/>
</dbReference>
<dbReference type="InterPro" id="IPR000836">
    <property type="entry name" value="PRibTrfase_dom"/>
</dbReference>
<dbReference type="InterPro" id="IPR029057">
    <property type="entry name" value="PRTase-like"/>
</dbReference>
<dbReference type="InterPro" id="IPR050054">
    <property type="entry name" value="UPRTase/APRTase"/>
</dbReference>
<dbReference type="NCBIfam" id="TIGR01090">
    <property type="entry name" value="apt"/>
    <property type="match status" value="1"/>
</dbReference>
<dbReference type="NCBIfam" id="NF002634">
    <property type="entry name" value="PRK02304.1-3"/>
    <property type="match status" value="1"/>
</dbReference>
<dbReference type="NCBIfam" id="NF002636">
    <property type="entry name" value="PRK02304.1-5"/>
    <property type="match status" value="1"/>
</dbReference>
<dbReference type="PANTHER" id="PTHR32315">
    <property type="entry name" value="ADENINE PHOSPHORIBOSYLTRANSFERASE"/>
    <property type="match status" value="1"/>
</dbReference>
<dbReference type="PANTHER" id="PTHR32315:SF3">
    <property type="entry name" value="ADENINE PHOSPHORIBOSYLTRANSFERASE"/>
    <property type="match status" value="1"/>
</dbReference>
<dbReference type="Pfam" id="PF00156">
    <property type="entry name" value="Pribosyltran"/>
    <property type="match status" value="1"/>
</dbReference>
<dbReference type="SUPFAM" id="SSF53271">
    <property type="entry name" value="PRTase-like"/>
    <property type="match status" value="1"/>
</dbReference>
<protein>
    <recommendedName>
        <fullName evidence="1">Adenine phosphoribosyltransferase</fullName>
        <shortName evidence="1">APRT</shortName>
        <ecNumber evidence="1">2.4.2.7</ecNumber>
    </recommendedName>
</protein>
<name>APT_BACFN</name>
<comment type="function">
    <text evidence="1">Catalyzes a salvage reaction resulting in the formation of AMP, that is energically less costly than de novo synthesis.</text>
</comment>
<comment type="catalytic activity">
    <reaction evidence="1">
        <text>AMP + diphosphate = 5-phospho-alpha-D-ribose 1-diphosphate + adenine</text>
        <dbReference type="Rhea" id="RHEA:16609"/>
        <dbReference type="ChEBI" id="CHEBI:16708"/>
        <dbReference type="ChEBI" id="CHEBI:33019"/>
        <dbReference type="ChEBI" id="CHEBI:58017"/>
        <dbReference type="ChEBI" id="CHEBI:456215"/>
        <dbReference type="EC" id="2.4.2.7"/>
    </reaction>
</comment>
<comment type="pathway">
    <text evidence="1">Purine metabolism; AMP biosynthesis via salvage pathway; AMP from adenine: step 1/1.</text>
</comment>
<comment type="subunit">
    <text evidence="1">Homodimer.</text>
</comment>
<comment type="subcellular location">
    <subcellularLocation>
        <location evidence="1">Cytoplasm</location>
    </subcellularLocation>
</comment>
<comment type="similarity">
    <text evidence="1">Belongs to the purine/pyrimidine phosphoribosyltransferase family.</text>
</comment>
<evidence type="ECO:0000255" key="1">
    <source>
        <dbReference type="HAMAP-Rule" id="MF_00004"/>
    </source>
</evidence>
<gene>
    <name evidence="1" type="primary">apt</name>
    <name type="ordered locus">BF0112</name>
</gene>
<proteinExistence type="inferred from homology"/>
<feature type="chain" id="PRO_1000000257" description="Adenine phosphoribosyltransferase">
    <location>
        <begin position="1"/>
        <end position="178"/>
    </location>
</feature>